<comment type="similarity">
    <text evidence="1">Belongs to the eukaryotic ribosomal protein eL34 family.</text>
</comment>
<dbReference type="EMBL" id="L27107">
    <property type="protein sequence ID" value="AAA57159.1"/>
    <property type="molecule type" value="mRNA"/>
</dbReference>
<dbReference type="EMBL" id="L27089">
    <property type="protein sequence ID" value="AAA57158.1"/>
    <property type="molecule type" value="mRNA"/>
</dbReference>
<dbReference type="PIR" id="S48027">
    <property type="entry name" value="S48027"/>
</dbReference>
<dbReference type="PDB" id="8AZW">
    <property type="method" value="EM"/>
    <property type="resolution" value="2.14 A"/>
    <property type="chains" value="T=1-120"/>
</dbReference>
<dbReference type="PDB" id="8B2L">
    <property type="method" value="EM"/>
    <property type="resolution" value="2.20 A"/>
    <property type="chains" value="T3=1-120"/>
</dbReference>
<dbReference type="PDBsum" id="8AZW"/>
<dbReference type="PDBsum" id="8B2L"/>
<dbReference type="EMDB" id="EMD-15773"/>
<dbReference type="EMDB" id="EMD-15806"/>
<dbReference type="SMR" id="P41098"/>
<dbReference type="STRING" id="4097.P41098"/>
<dbReference type="PaxDb" id="4097-P41098"/>
<dbReference type="KEGG" id="nta:107763405"/>
<dbReference type="KEGG" id="nta:107779746"/>
<dbReference type="OMA" id="NMQRILC"/>
<dbReference type="OrthoDB" id="2014006at2759"/>
<dbReference type="PhylomeDB" id="P41098"/>
<dbReference type="Proteomes" id="UP000084051">
    <property type="component" value="Unplaced"/>
</dbReference>
<dbReference type="GO" id="GO:0022625">
    <property type="term" value="C:cytosolic large ribosomal subunit"/>
    <property type="evidence" value="ECO:0000318"/>
    <property type="project" value="GO_Central"/>
</dbReference>
<dbReference type="GO" id="GO:0003735">
    <property type="term" value="F:structural constituent of ribosome"/>
    <property type="evidence" value="ECO:0000318"/>
    <property type="project" value="GO_Central"/>
</dbReference>
<dbReference type="GO" id="GO:0042254">
    <property type="term" value="P:ribosome biogenesis"/>
    <property type="evidence" value="ECO:0000318"/>
    <property type="project" value="GO_Central"/>
</dbReference>
<dbReference type="GO" id="GO:0006412">
    <property type="term" value="P:translation"/>
    <property type="evidence" value="ECO:0007669"/>
    <property type="project" value="InterPro"/>
</dbReference>
<dbReference type="Gene3D" id="6.20.340.10">
    <property type="match status" value="1"/>
</dbReference>
<dbReference type="Gene3D" id="6.20.370.70">
    <property type="match status" value="1"/>
</dbReference>
<dbReference type="InterPro" id="IPR008195">
    <property type="entry name" value="Ribosomal_eL34"/>
</dbReference>
<dbReference type="InterPro" id="IPR038562">
    <property type="entry name" value="Ribosomal_eL34_C_sf"/>
</dbReference>
<dbReference type="InterPro" id="IPR018065">
    <property type="entry name" value="Ribosomal_eL34_CS"/>
</dbReference>
<dbReference type="PANTHER" id="PTHR10759">
    <property type="entry name" value="60S RIBOSOMAL PROTEIN L34"/>
    <property type="match status" value="1"/>
</dbReference>
<dbReference type="Pfam" id="PF01199">
    <property type="entry name" value="Ribosomal_L34e"/>
    <property type="match status" value="1"/>
</dbReference>
<dbReference type="PRINTS" id="PR01250">
    <property type="entry name" value="RIBOSOMALL34"/>
</dbReference>
<dbReference type="PROSITE" id="PS01145">
    <property type="entry name" value="RIBOSOMAL_L34E"/>
    <property type="match status" value="1"/>
</dbReference>
<evidence type="ECO:0000305" key="1"/>
<name>RL34_TOBAC</name>
<accession>P41098</accession>
<protein>
    <recommendedName>
        <fullName evidence="1">Large ribosomal subunit protein eL34</fullName>
    </recommendedName>
    <alternativeName>
        <fullName>60S ribosomal protein L34</fullName>
    </alternativeName>
</protein>
<feature type="chain" id="PRO_0000131841" description="Large ribosomal subunit protein eL34">
    <location>
        <begin position="1"/>
        <end position="120"/>
    </location>
</feature>
<reference key="1">
    <citation type="journal article" date="1994" name="Plant Mol. Biol.">
        <title>Developmental and environmental regulation of two ribosomal protein genes in tobacco.</title>
        <authorList>
            <person name="Gao J."/>
            <person name="Kim S.R."/>
            <person name="Chung Y.Y."/>
            <person name="Lee J.M."/>
            <person name="An G."/>
        </authorList>
    </citation>
    <scope>NUCLEOTIDE SEQUENCE [MRNA]</scope>
</reference>
<sequence>MVQRLTYRKRHSYATKSNQHRVVKTPGGKLIYQSTKKRASGPKCPVTGKRIQGIPHLRPTEYKRSRLSRNRRTVNRAYGGVLSGSAVRERIIRAFLVEEQKIVKKVLKIQKAKEKLAAKS</sequence>
<organism>
    <name type="scientific">Nicotiana tabacum</name>
    <name type="common">Common tobacco</name>
    <dbReference type="NCBI Taxonomy" id="4097"/>
    <lineage>
        <taxon>Eukaryota</taxon>
        <taxon>Viridiplantae</taxon>
        <taxon>Streptophyta</taxon>
        <taxon>Embryophyta</taxon>
        <taxon>Tracheophyta</taxon>
        <taxon>Spermatophyta</taxon>
        <taxon>Magnoliopsida</taxon>
        <taxon>eudicotyledons</taxon>
        <taxon>Gunneridae</taxon>
        <taxon>Pentapetalae</taxon>
        <taxon>asterids</taxon>
        <taxon>lamiids</taxon>
        <taxon>Solanales</taxon>
        <taxon>Solanaceae</taxon>
        <taxon>Nicotianoideae</taxon>
        <taxon>Nicotianeae</taxon>
        <taxon>Nicotiana</taxon>
    </lineage>
</organism>
<keyword id="KW-0002">3D-structure</keyword>
<keyword id="KW-1185">Reference proteome</keyword>
<keyword id="KW-0687">Ribonucleoprotein</keyword>
<keyword id="KW-0689">Ribosomal protein</keyword>
<proteinExistence type="evidence at protein level"/>
<gene>
    <name type="primary">RPL34</name>
</gene>